<reference key="1">
    <citation type="journal article" date="1998" name="Nature">
        <title>Deciphering the biology of Mycobacterium tuberculosis from the complete genome sequence.</title>
        <authorList>
            <person name="Cole S.T."/>
            <person name="Brosch R."/>
            <person name="Parkhill J."/>
            <person name="Garnier T."/>
            <person name="Churcher C.M."/>
            <person name="Harris D.E."/>
            <person name="Gordon S.V."/>
            <person name="Eiglmeier K."/>
            <person name="Gas S."/>
            <person name="Barry C.E. III"/>
            <person name="Tekaia F."/>
            <person name="Badcock K."/>
            <person name="Basham D."/>
            <person name="Brown D."/>
            <person name="Chillingworth T."/>
            <person name="Connor R."/>
            <person name="Davies R.M."/>
            <person name="Devlin K."/>
            <person name="Feltwell T."/>
            <person name="Gentles S."/>
            <person name="Hamlin N."/>
            <person name="Holroyd S."/>
            <person name="Hornsby T."/>
            <person name="Jagels K."/>
            <person name="Krogh A."/>
            <person name="McLean J."/>
            <person name="Moule S."/>
            <person name="Murphy L.D."/>
            <person name="Oliver S."/>
            <person name="Osborne J."/>
            <person name="Quail M.A."/>
            <person name="Rajandream M.A."/>
            <person name="Rogers J."/>
            <person name="Rutter S."/>
            <person name="Seeger K."/>
            <person name="Skelton S."/>
            <person name="Squares S."/>
            <person name="Squares R."/>
            <person name="Sulston J.E."/>
            <person name="Taylor K."/>
            <person name="Whitehead S."/>
            <person name="Barrell B.G."/>
        </authorList>
    </citation>
    <scope>NUCLEOTIDE SEQUENCE [LARGE SCALE GENOMIC DNA]</scope>
    <source>
        <strain>ATCC 25618 / H37Rv</strain>
    </source>
</reference>
<reference key="2">
    <citation type="journal article" date="2009" name="PLoS Genet.">
        <title>Comprehensive functional analysis of Mycobacterium tuberculosis toxin-antitoxin systems: implications for pathogenesis, stress responses, and evolution.</title>
        <authorList>
            <person name="Ramage H.R."/>
            <person name="Connolly L.E."/>
            <person name="Cox J.S."/>
        </authorList>
    </citation>
    <scope>EXPRESSION IN M.SMEGMATIS</scope>
    <scope>FUNCTION AS A TOXIN</scope>
    <source>
        <strain>ATCC 35801 / TMC 107 / Erdman</strain>
    </source>
</reference>
<reference key="3">
    <citation type="journal article" date="2011" name="Mol. Cell. Proteomics">
        <title>Proteogenomic analysis of Mycobacterium tuberculosis by high resolution mass spectrometry.</title>
        <authorList>
            <person name="Kelkar D.S."/>
            <person name="Kumar D."/>
            <person name="Kumar P."/>
            <person name="Balakrishnan L."/>
            <person name="Muthusamy B."/>
            <person name="Yadav A.K."/>
            <person name="Shrivastava P."/>
            <person name="Marimuthu A."/>
            <person name="Anand S."/>
            <person name="Sundaram H."/>
            <person name="Kingsbury R."/>
            <person name="Harsha H.C."/>
            <person name="Nair B."/>
            <person name="Prasad T.S."/>
            <person name="Chauhan D.S."/>
            <person name="Katoch K."/>
            <person name="Katoch V.M."/>
            <person name="Kumar P."/>
            <person name="Chaerkady R."/>
            <person name="Ramachandran S."/>
            <person name="Dash D."/>
            <person name="Pandey A."/>
        </authorList>
    </citation>
    <scope>IDENTIFICATION BY MASS SPECTROMETRY [LARGE SCALE ANALYSIS]</scope>
    <source>
        <strain>ATCC 25618 / H37Rv</strain>
    </source>
</reference>
<accession>P9WF55</accession>
<accession>L0TCH7</accession>
<accession>P65043</accession>
<accession>Q10800</accession>
<protein>
    <recommendedName>
        <fullName evidence="1">Ribonuclease VapC43</fullName>
        <shortName evidence="1">RNase VapC43</shortName>
        <ecNumber evidence="1">3.1.-.-</ecNumber>
    </recommendedName>
    <alternativeName>
        <fullName evidence="1">Toxin VapC43</fullName>
    </alternativeName>
</protein>
<organism>
    <name type="scientific">Mycobacterium tuberculosis (strain ATCC 25618 / H37Rv)</name>
    <dbReference type="NCBI Taxonomy" id="83332"/>
    <lineage>
        <taxon>Bacteria</taxon>
        <taxon>Bacillati</taxon>
        <taxon>Actinomycetota</taxon>
        <taxon>Actinomycetes</taxon>
        <taxon>Mycobacteriales</taxon>
        <taxon>Mycobacteriaceae</taxon>
        <taxon>Mycobacterium</taxon>
        <taxon>Mycobacterium tuberculosis complex</taxon>
    </lineage>
</organism>
<proteinExistence type="evidence at protein level"/>
<gene>
    <name evidence="1" type="primary">vapC43</name>
    <name type="ordered locus">Rv2872</name>
    <name type="ORF">MTCY274.03</name>
</gene>
<name>VPC43_MYCTU</name>
<feature type="chain" id="PRO_0000104087" description="Ribonuclease VapC43">
    <location>
        <begin position="1"/>
        <end position="147"/>
    </location>
</feature>
<feature type="domain" description="PINc" evidence="1">
    <location>
        <begin position="3"/>
        <end position="139"/>
    </location>
</feature>
<feature type="binding site" evidence="1">
    <location>
        <position position="5"/>
    </location>
    <ligand>
        <name>Mg(2+)</name>
        <dbReference type="ChEBI" id="CHEBI:18420"/>
    </ligand>
</feature>
<feature type="binding site" evidence="1">
    <location>
        <position position="108"/>
    </location>
    <ligand>
        <name>Mg(2+)</name>
        <dbReference type="ChEBI" id="CHEBI:18420"/>
    </ligand>
</feature>
<feature type="strand" evidence="3">
    <location>
        <begin position="2"/>
        <end position="4"/>
    </location>
</feature>
<feature type="helix" evidence="3">
    <location>
        <begin position="6"/>
        <end position="13"/>
    </location>
</feature>
<feature type="helix" evidence="3">
    <location>
        <begin position="20"/>
        <end position="32"/>
    </location>
</feature>
<feature type="strand" evidence="3">
    <location>
        <begin position="33"/>
        <end position="35"/>
    </location>
</feature>
<feature type="strand" evidence="3">
    <location>
        <begin position="37"/>
        <end position="40"/>
    </location>
</feature>
<feature type="helix" evidence="3">
    <location>
        <begin position="41"/>
        <end position="51"/>
    </location>
</feature>
<feature type="turn" evidence="3">
    <location>
        <begin position="54"/>
        <end position="56"/>
    </location>
</feature>
<feature type="strand" evidence="3">
    <location>
        <begin position="57"/>
        <end position="59"/>
    </location>
</feature>
<feature type="helix" evidence="3">
    <location>
        <begin position="63"/>
        <end position="75"/>
    </location>
</feature>
<feature type="strand" evidence="3">
    <location>
        <begin position="79"/>
        <end position="82"/>
    </location>
</feature>
<feature type="helix" evidence="3">
    <location>
        <begin position="86"/>
        <end position="99"/>
    </location>
</feature>
<feature type="helix" evidence="3">
    <location>
        <begin position="105"/>
        <end position="117"/>
    </location>
</feature>
<feature type="strand" evidence="3">
    <location>
        <begin position="121"/>
        <end position="123"/>
    </location>
</feature>
<feature type="helix" evidence="3">
    <location>
        <begin position="127"/>
        <end position="131"/>
    </location>
</feature>
<feature type="strand" evidence="3">
    <location>
        <begin position="133"/>
        <end position="135"/>
    </location>
</feature>
<dbReference type="EC" id="3.1.-.-" evidence="1"/>
<dbReference type="EMBL" id="AL123456">
    <property type="protein sequence ID" value="CCP45674.1"/>
    <property type="molecule type" value="Genomic_DNA"/>
</dbReference>
<dbReference type="PIR" id="C70923">
    <property type="entry name" value="C70923"/>
</dbReference>
<dbReference type="RefSeq" id="NP_217388.1">
    <property type="nucleotide sequence ID" value="NC_000962.3"/>
</dbReference>
<dbReference type="RefSeq" id="WP_003414624.1">
    <property type="nucleotide sequence ID" value="NZ_NVQJ01000006.1"/>
</dbReference>
<dbReference type="PDB" id="7VWO">
    <property type="method" value="X-ray"/>
    <property type="resolution" value="2.00 A"/>
    <property type="chains" value="A/B/E/G/I/K=1-142"/>
</dbReference>
<dbReference type="PDBsum" id="7VWO"/>
<dbReference type="SMR" id="P9WF55"/>
<dbReference type="STRING" id="83332.Rv2872"/>
<dbReference type="PaxDb" id="83332-Rv2872"/>
<dbReference type="DNASU" id="887361"/>
<dbReference type="GeneID" id="887361"/>
<dbReference type="KEGG" id="mtu:Rv2872"/>
<dbReference type="KEGG" id="mtv:RVBD_2872"/>
<dbReference type="TubercuList" id="Rv2872"/>
<dbReference type="eggNOG" id="COG1848">
    <property type="taxonomic scope" value="Bacteria"/>
</dbReference>
<dbReference type="InParanoid" id="P9WF55"/>
<dbReference type="OrthoDB" id="556169at2"/>
<dbReference type="PhylomeDB" id="P9WF55"/>
<dbReference type="Proteomes" id="UP000001584">
    <property type="component" value="Chromosome"/>
</dbReference>
<dbReference type="GO" id="GO:0000287">
    <property type="term" value="F:magnesium ion binding"/>
    <property type="evidence" value="ECO:0007669"/>
    <property type="project" value="UniProtKB-UniRule"/>
</dbReference>
<dbReference type="GO" id="GO:0004540">
    <property type="term" value="F:RNA nuclease activity"/>
    <property type="evidence" value="ECO:0007669"/>
    <property type="project" value="InterPro"/>
</dbReference>
<dbReference type="GO" id="GO:0045926">
    <property type="term" value="P:negative regulation of growth"/>
    <property type="evidence" value="ECO:0000315"/>
    <property type="project" value="MTBBASE"/>
</dbReference>
<dbReference type="Gene3D" id="3.40.50.1010">
    <property type="entry name" value="5'-nuclease"/>
    <property type="match status" value="1"/>
</dbReference>
<dbReference type="HAMAP" id="MF_00265">
    <property type="entry name" value="VapC_Nob1"/>
    <property type="match status" value="1"/>
</dbReference>
<dbReference type="InterPro" id="IPR006226">
    <property type="entry name" value="Mtu_PIN"/>
</dbReference>
<dbReference type="InterPro" id="IPR029060">
    <property type="entry name" value="PIN-like_dom_sf"/>
</dbReference>
<dbReference type="InterPro" id="IPR002716">
    <property type="entry name" value="PIN_dom"/>
</dbReference>
<dbReference type="InterPro" id="IPR022907">
    <property type="entry name" value="VapC_family"/>
</dbReference>
<dbReference type="NCBIfam" id="TIGR00028">
    <property type="entry name" value="Mtu_PIN_fam"/>
    <property type="match status" value="1"/>
</dbReference>
<dbReference type="Pfam" id="PF01850">
    <property type="entry name" value="PIN"/>
    <property type="match status" value="1"/>
</dbReference>
<dbReference type="SUPFAM" id="SSF88723">
    <property type="entry name" value="PIN domain-like"/>
    <property type="match status" value="1"/>
</dbReference>
<evidence type="ECO:0000255" key="1">
    <source>
        <dbReference type="HAMAP-Rule" id="MF_00265"/>
    </source>
</evidence>
<evidence type="ECO:0000269" key="2">
    <source>
    </source>
</evidence>
<evidence type="ECO:0007829" key="3">
    <source>
        <dbReference type="PDB" id="7VWO"/>
    </source>
</evidence>
<sequence length="147" mass="16596">MLCVDVNVLVYAHRADLREHADYRGLLERLANDDEPLGLPDSVLAGFIRVVTNRRVFTEPTSPQDAWQAVDALLAAPAAMRLRPGERHWMAFRQLASDVDANGNDIADAHLAAYALENNATWLSADRGFARFRRLRWRHPLDGQTHL</sequence>
<keyword id="KW-0002">3D-structure</keyword>
<keyword id="KW-0378">Hydrolase</keyword>
<keyword id="KW-0460">Magnesium</keyword>
<keyword id="KW-0479">Metal-binding</keyword>
<keyword id="KW-0540">Nuclease</keyword>
<keyword id="KW-1185">Reference proteome</keyword>
<keyword id="KW-1277">Toxin-antitoxin system</keyword>
<comment type="function">
    <text evidence="1 2">Toxic component of a type II toxin-antitoxin (TA) system. An RNase (By similarity). Upon expression in M.smegmatis inhibits colony formation. Its toxic effect is neutralized by coexpression with cognate antitoxin VapB43.</text>
</comment>
<comment type="cofactor">
    <cofactor evidence="1">
        <name>Mg(2+)</name>
        <dbReference type="ChEBI" id="CHEBI:18420"/>
    </cofactor>
</comment>
<comment type="similarity">
    <text evidence="1">Belongs to the PINc/VapC protein family.</text>
</comment>